<name>RPOB_ACET2</name>
<dbReference type="EC" id="2.7.7.6" evidence="1"/>
<dbReference type="EMBL" id="CP000568">
    <property type="protein sequence ID" value="ABN53923.1"/>
    <property type="molecule type" value="Genomic_DNA"/>
</dbReference>
<dbReference type="RefSeq" id="WP_020457900.1">
    <property type="nucleotide sequence ID" value="NC_009012.1"/>
</dbReference>
<dbReference type="PDB" id="8I23">
    <property type="method" value="EM"/>
    <property type="resolution" value="3.03 A"/>
    <property type="chains" value="C=1-1250"/>
</dbReference>
<dbReference type="PDB" id="8I24">
    <property type="method" value="EM"/>
    <property type="resolution" value="3.36 A"/>
    <property type="chains" value="C=1-1250"/>
</dbReference>
<dbReference type="PDBsum" id="8I23"/>
<dbReference type="PDBsum" id="8I24"/>
<dbReference type="EMDB" id="EMD-35130"/>
<dbReference type="EMDB" id="EMD-35131"/>
<dbReference type="SMR" id="A3DIZ4"/>
<dbReference type="STRING" id="203119.Cthe_2724"/>
<dbReference type="GeneID" id="35802901"/>
<dbReference type="KEGG" id="cth:Cthe_2724"/>
<dbReference type="eggNOG" id="COG0085">
    <property type="taxonomic scope" value="Bacteria"/>
</dbReference>
<dbReference type="HOGENOM" id="CLU_000524_4_0_9"/>
<dbReference type="OrthoDB" id="9803954at2"/>
<dbReference type="Proteomes" id="UP000002145">
    <property type="component" value="Chromosome"/>
</dbReference>
<dbReference type="GO" id="GO:0000428">
    <property type="term" value="C:DNA-directed RNA polymerase complex"/>
    <property type="evidence" value="ECO:0007669"/>
    <property type="project" value="UniProtKB-KW"/>
</dbReference>
<dbReference type="GO" id="GO:0003677">
    <property type="term" value="F:DNA binding"/>
    <property type="evidence" value="ECO:0007669"/>
    <property type="project" value="UniProtKB-UniRule"/>
</dbReference>
<dbReference type="GO" id="GO:0003899">
    <property type="term" value="F:DNA-directed RNA polymerase activity"/>
    <property type="evidence" value="ECO:0007669"/>
    <property type="project" value="UniProtKB-UniRule"/>
</dbReference>
<dbReference type="GO" id="GO:0032549">
    <property type="term" value="F:ribonucleoside binding"/>
    <property type="evidence" value="ECO:0007669"/>
    <property type="project" value="InterPro"/>
</dbReference>
<dbReference type="GO" id="GO:0006351">
    <property type="term" value="P:DNA-templated transcription"/>
    <property type="evidence" value="ECO:0007669"/>
    <property type="project" value="UniProtKB-UniRule"/>
</dbReference>
<dbReference type="CDD" id="cd00653">
    <property type="entry name" value="RNA_pol_B_RPB2"/>
    <property type="match status" value="1"/>
</dbReference>
<dbReference type="FunFam" id="3.90.1800.10:FF:000001">
    <property type="entry name" value="DNA-directed RNA polymerase subunit beta"/>
    <property type="match status" value="1"/>
</dbReference>
<dbReference type="Gene3D" id="2.40.50.100">
    <property type="match status" value="1"/>
</dbReference>
<dbReference type="Gene3D" id="2.40.50.150">
    <property type="match status" value="1"/>
</dbReference>
<dbReference type="Gene3D" id="3.90.1100.10">
    <property type="match status" value="1"/>
</dbReference>
<dbReference type="Gene3D" id="2.30.150.10">
    <property type="entry name" value="DNA-directed RNA polymerase, beta subunit, external 1 domain"/>
    <property type="match status" value="1"/>
</dbReference>
<dbReference type="Gene3D" id="2.40.270.10">
    <property type="entry name" value="DNA-directed RNA polymerase, subunit 2, domain 6"/>
    <property type="match status" value="1"/>
</dbReference>
<dbReference type="Gene3D" id="3.90.1800.10">
    <property type="entry name" value="RNA polymerase alpha subunit dimerisation domain"/>
    <property type="match status" value="1"/>
</dbReference>
<dbReference type="Gene3D" id="3.90.1110.10">
    <property type="entry name" value="RNA polymerase Rpb2, domain 2"/>
    <property type="match status" value="1"/>
</dbReference>
<dbReference type="HAMAP" id="MF_01321">
    <property type="entry name" value="RNApol_bact_RpoB"/>
    <property type="match status" value="1"/>
</dbReference>
<dbReference type="InterPro" id="IPR042107">
    <property type="entry name" value="DNA-dir_RNA_pol_bsu_ext_1_sf"/>
</dbReference>
<dbReference type="InterPro" id="IPR019462">
    <property type="entry name" value="DNA-dir_RNA_pol_bsu_external_1"/>
</dbReference>
<dbReference type="InterPro" id="IPR015712">
    <property type="entry name" value="DNA-dir_RNA_pol_su2"/>
</dbReference>
<dbReference type="InterPro" id="IPR007120">
    <property type="entry name" value="DNA-dir_RNAP_su2_dom"/>
</dbReference>
<dbReference type="InterPro" id="IPR037033">
    <property type="entry name" value="DNA-dir_RNAP_su2_hyb_sf"/>
</dbReference>
<dbReference type="InterPro" id="IPR010243">
    <property type="entry name" value="RNA_pol_bsu_bac"/>
</dbReference>
<dbReference type="InterPro" id="IPR007121">
    <property type="entry name" value="RNA_pol_bsu_CS"/>
</dbReference>
<dbReference type="InterPro" id="IPR007644">
    <property type="entry name" value="RNA_pol_bsu_protrusion"/>
</dbReference>
<dbReference type="InterPro" id="IPR007642">
    <property type="entry name" value="RNA_pol_Rpb2_2"/>
</dbReference>
<dbReference type="InterPro" id="IPR037034">
    <property type="entry name" value="RNA_pol_Rpb2_2_sf"/>
</dbReference>
<dbReference type="InterPro" id="IPR007645">
    <property type="entry name" value="RNA_pol_Rpb2_3"/>
</dbReference>
<dbReference type="InterPro" id="IPR007641">
    <property type="entry name" value="RNA_pol_Rpb2_7"/>
</dbReference>
<dbReference type="InterPro" id="IPR014724">
    <property type="entry name" value="RNA_pol_RPB2_OB-fold"/>
</dbReference>
<dbReference type="NCBIfam" id="NF001616">
    <property type="entry name" value="PRK00405.1"/>
    <property type="match status" value="1"/>
</dbReference>
<dbReference type="NCBIfam" id="TIGR02013">
    <property type="entry name" value="rpoB"/>
    <property type="match status" value="1"/>
</dbReference>
<dbReference type="PANTHER" id="PTHR20856">
    <property type="entry name" value="DNA-DIRECTED RNA POLYMERASE I SUBUNIT 2"/>
    <property type="match status" value="1"/>
</dbReference>
<dbReference type="Pfam" id="PF04563">
    <property type="entry name" value="RNA_pol_Rpb2_1"/>
    <property type="match status" value="1"/>
</dbReference>
<dbReference type="Pfam" id="PF04561">
    <property type="entry name" value="RNA_pol_Rpb2_2"/>
    <property type="match status" value="2"/>
</dbReference>
<dbReference type="Pfam" id="PF04565">
    <property type="entry name" value="RNA_pol_Rpb2_3"/>
    <property type="match status" value="1"/>
</dbReference>
<dbReference type="Pfam" id="PF10385">
    <property type="entry name" value="RNA_pol_Rpb2_45"/>
    <property type="match status" value="1"/>
</dbReference>
<dbReference type="Pfam" id="PF00562">
    <property type="entry name" value="RNA_pol_Rpb2_6"/>
    <property type="match status" value="1"/>
</dbReference>
<dbReference type="Pfam" id="PF04560">
    <property type="entry name" value="RNA_pol_Rpb2_7"/>
    <property type="match status" value="1"/>
</dbReference>
<dbReference type="SUPFAM" id="SSF64484">
    <property type="entry name" value="beta and beta-prime subunits of DNA dependent RNA-polymerase"/>
    <property type="match status" value="1"/>
</dbReference>
<dbReference type="PROSITE" id="PS01166">
    <property type="entry name" value="RNA_POL_BETA"/>
    <property type="match status" value="1"/>
</dbReference>
<reference key="1">
    <citation type="submission" date="2007-02" db="EMBL/GenBank/DDBJ databases">
        <title>Complete sequence of Clostridium thermocellum ATCC 27405.</title>
        <authorList>
            <consortium name="US DOE Joint Genome Institute"/>
            <person name="Copeland A."/>
            <person name="Lucas S."/>
            <person name="Lapidus A."/>
            <person name="Barry K."/>
            <person name="Detter J.C."/>
            <person name="Glavina del Rio T."/>
            <person name="Hammon N."/>
            <person name="Israni S."/>
            <person name="Dalin E."/>
            <person name="Tice H."/>
            <person name="Pitluck S."/>
            <person name="Chertkov O."/>
            <person name="Brettin T."/>
            <person name="Bruce D."/>
            <person name="Han C."/>
            <person name="Tapia R."/>
            <person name="Gilna P."/>
            <person name="Schmutz J."/>
            <person name="Larimer F."/>
            <person name="Land M."/>
            <person name="Hauser L."/>
            <person name="Kyrpides N."/>
            <person name="Mikhailova N."/>
            <person name="Wu J.H.D."/>
            <person name="Newcomb M."/>
            <person name="Richardson P."/>
        </authorList>
    </citation>
    <scope>NUCLEOTIDE SEQUENCE [LARGE SCALE GENOMIC DNA]</scope>
    <source>
        <strain>ATCC 27405 / DSM 1237 / JCM 9322 / NBRC 103400 / NCIMB 10682 / NRRL B-4536 / VPI 7372</strain>
    </source>
</reference>
<evidence type="ECO:0000255" key="1">
    <source>
        <dbReference type="HAMAP-Rule" id="MF_01321"/>
    </source>
</evidence>
<evidence type="ECO:0000256" key="2">
    <source>
        <dbReference type="SAM" id="MobiDB-lite"/>
    </source>
</evidence>
<evidence type="ECO:0007829" key="3">
    <source>
        <dbReference type="PDB" id="8I23"/>
    </source>
</evidence>
<evidence type="ECO:0007829" key="4">
    <source>
        <dbReference type="PDB" id="8I24"/>
    </source>
</evidence>
<protein>
    <recommendedName>
        <fullName evidence="1">DNA-directed RNA polymerase subunit beta</fullName>
        <shortName evidence="1">RNAP subunit beta</shortName>
        <ecNumber evidence="1">2.7.7.6</ecNumber>
    </recommendedName>
    <alternativeName>
        <fullName evidence="1">RNA polymerase subunit beta</fullName>
    </alternativeName>
    <alternativeName>
        <fullName evidence="1">Transcriptase subunit beta</fullName>
    </alternativeName>
</protein>
<feature type="chain" id="PRO_0000300303" description="DNA-directed RNA polymerase subunit beta">
    <location>
        <begin position="1"/>
        <end position="1250"/>
    </location>
</feature>
<feature type="region of interest" description="Disordered" evidence="2">
    <location>
        <begin position="1215"/>
        <end position="1250"/>
    </location>
</feature>
<feature type="strand" evidence="3">
    <location>
        <begin position="3"/>
        <end position="6"/>
    </location>
</feature>
<feature type="strand" evidence="3">
    <location>
        <begin position="8"/>
        <end position="14"/>
    </location>
</feature>
<feature type="helix" evidence="3">
    <location>
        <begin position="29"/>
        <end position="50"/>
    </location>
</feature>
<feature type="strand" evidence="4">
    <location>
        <begin position="56"/>
        <end position="59"/>
    </location>
</feature>
<feature type="strand" evidence="3">
    <location>
        <begin position="61"/>
        <end position="68"/>
    </location>
</feature>
<feature type="helix" evidence="3">
    <location>
        <begin position="77"/>
        <end position="82"/>
    </location>
</feature>
<feature type="strand" evidence="3">
    <location>
        <begin position="88"/>
        <end position="98"/>
    </location>
</feature>
<feature type="strand" evidence="3">
    <location>
        <begin position="100"/>
        <end position="102"/>
    </location>
</feature>
<feature type="strand" evidence="3">
    <location>
        <begin position="105"/>
        <end position="116"/>
    </location>
</feature>
<feature type="strand" evidence="3">
    <location>
        <begin position="124"/>
        <end position="126"/>
    </location>
</feature>
<feature type="strand" evidence="3">
    <location>
        <begin position="129"/>
        <end position="133"/>
    </location>
</feature>
<feature type="strand" evidence="3">
    <location>
        <begin position="135"/>
        <end position="139"/>
    </location>
</feature>
<feature type="strand" evidence="3">
    <location>
        <begin position="141"/>
        <end position="149"/>
    </location>
</feature>
<feature type="strand" evidence="3">
    <location>
        <begin position="151"/>
        <end position="153"/>
    </location>
</feature>
<feature type="strand" evidence="3">
    <location>
        <begin position="155"/>
        <end position="162"/>
    </location>
</feature>
<feature type="strand" evidence="3">
    <location>
        <begin position="164"/>
        <end position="166"/>
    </location>
</feature>
<feature type="strand" evidence="3">
    <location>
        <begin position="169"/>
        <end position="173"/>
    </location>
</feature>
<feature type="strand" evidence="3">
    <location>
        <begin position="175"/>
        <end position="177"/>
    </location>
</feature>
<feature type="strand" evidence="3">
    <location>
        <begin position="179"/>
        <end position="183"/>
    </location>
</feature>
<feature type="helix" evidence="3">
    <location>
        <begin position="191"/>
        <end position="197"/>
    </location>
</feature>
<feature type="helix" evidence="3">
    <location>
        <begin position="203"/>
        <end position="209"/>
    </location>
</feature>
<feature type="helix" evidence="3">
    <location>
        <begin position="214"/>
        <end position="222"/>
    </location>
</feature>
<feature type="helix" evidence="3">
    <location>
        <begin position="228"/>
        <end position="239"/>
    </location>
</feature>
<feature type="helix" evidence="3">
    <location>
        <begin position="247"/>
        <end position="257"/>
    </location>
</feature>
<feature type="turn" evidence="3">
    <location>
        <begin position="261"/>
        <end position="263"/>
    </location>
</feature>
<feature type="helix" evidence="3">
    <location>
        <begin position="268"/>
        <end position="277"/>
    </location>
</feature>
<feature type="helix" evidence="3">
    <location>
        <begin position="280"/>
        <end position="283"/>
    </location>
</feature>
<feature type="strand" evidence="3">
    <location>
        <begin position="284"/>
        <end position="289"/>
    </location>
</feature>
<feature type="strand" evidence="3">
    <location>
        <begin position="304"/>
        <end position="306"/>
    </location>
</feature>
<feature type="helix" evidence="3">
    <location>
        <begin position="309"/>
        <end position="317"/>
    </location>
</feature>
<feature type="turn" evidence="3">
    <location>
        <begin position="318"/>
        <end position="322"/>
    </location>
</feature>
<feature type="strand" evidence="3">
    <location>
        <begin position="324"/>
        <end position="330"/>
    </location>
</feature>
<feature type="turn" evidence="3">
    <location>
        <begin position="345"/>
        <end position="347"/>
    </location>
</feature>
<feature type="strand" evidence="3">
    <location>
        <begin position="348"/>
        <end position="350"/>
    </location>
</feature>
<feature type="turn" evidence="3">
    <location>
        <begin position="353"/>
        <end position="356"/>
    </location>
</feature>
<feature type="helix" evidence="3">
    <location>
        <begin position="364"/>
        <end position="372"/>
    </location>
</feature>
<feature type="helix" evidence="3">
    <location>
        <begin position="378"/>
        <end position="392"/>
    </location>
</feature>
<feature type="helix" evidence="3">
    <location>
        <begin position="399"/>
        <end position="411"/>
    </location>
</feature>
<feature type="helix" evidence="3">
    <location>
        <begin position="412"/>
        <end position="414"/>
    </location>
</feature>
<feature type="strand" evidence="3">
    <location>
        <begin position="427"/>
        <end position="431"/>
    </location>
</feature>
<feature type="helix" evidence="3">
    <location>
        <begin position="433"/>
        <end position="455"/>
    </location>
</feature>
<feature type="turn" evidence="3">
    <location>
        <begin position="456"/>
        <end position="458"/>
    </location>
</feature>
<feature type="helix" evidence="3">
    <location>
        <begin position="466"/>
        <end position="468"/>
    </location>
</feature>
<feature type="helix" evidence="3">
    <location>
        <begin position="473"/>
        <end position="484"/>
    </location>
</feature>
<feature type="strand" evidence="3">
    <location>
        <begin position="487"/>
        <end position="491"/>
    </location>
</feature>
<feature type="helix" evidence="3">
    <location>
        <begin position="497"/>
        <end position="503"/>
    </location>
</feature>
<feature type="strand" evidence="3">
    <location>
        <begin position="506"/>
        <end position="508"/>
    </location>
</feature>
<feature type="turn" evidence="3">
    <location>
        <begin position="517"/>
        <end position="519"/>
    </location>
</feature>
<feature type="turn" evidence="3">
    <location>
        <begin position="523"/>
        <end position="525"/>
    </location>
</feature>
<feature type="helix" evidence="3">
    <location>
        <begin position="529"/>
        <end position="531"/>
    </location>
</feature>
<feature type="turn" evidence="3">
    <location>
        <begin position="532"/>
        <end position="534"/>
    </location>
</feature>
<feature type="helix" evidence="3">
    <location>
        <begin position="543"/>
        <end position="545"/>
    </location>
</feature>
<feature type="turn" evidence="3">
    <location>
        <begin position="546"/>
        <end position="548"/>
    </location>
</feature>
<feature type="strand" evidence="3">
    <location>
        <begin position="549"/>
        <end position="552"/>
    </location>
</feature>
<feature type="strand" evidence="3">
    <location>
        <begin position="564"/>
        <end position="571"/>
    </location>
</feature>
<feature type="strand" evidence="3">
    <location>
        <begin position="573"/>
        <end position="575"/>
    </location>
</feature>
<feature type="strand" evidence="3">
    <location>
        <begin position="578"/>
        <end position="587"/>
    </location>
</feature>
<feature type="turn" evidence="3">
    <location>
        <begin position="588"/>
        <end position="592"/>
    </location>
</feature>
<feature type="strand" evidence="3">
    <location>
        <begin position="607"/>
        <end position="609"/>
    </location>
</feature>
<feature type="strand" evidence="3">
    <location>
        <begin position="612"/>
        <end position="615"/>
    </location>
</feature>
<feature type="strand" evidence="4">
    <location>
        <begin position="621"/>
        <end position="625"/>
    </location>
</feature>
<feature type="strand" evidence="3">
    <location>
        <begin position="632"/>
        <end position="635"/>
    </location>
</feature>
<feature type="strand" evidence="3">
    <location>
        <begin position="639"/>
        <end position="641"/>
    </location>
</feature>
<feature type="helix" evidence="3">
    <location>
        <begin position="645"/>
        <end position="647"/>
    </location>
</feature>
<feature type="strand" evidence="3">
    <location>
        <begin position="648"/>
        <end position="650"/>
    </location>
</feature>
<feature type="helix" evidence="3">
    <location>
        <begin position="656"/>
        <end position="665"/>
    </location>
</feature>
<feature type="strand" evidence="3">
    <location>
        <begin position="679"/>
        <end position="681"/>
    </location>
</feature>
<feature type="helix" evidence="3">
    <location>
        <begin position="685"/>
        <end position="691"/>
    </location>
</feature>
<feature type="strand" evidence="3">
    <location>
        <begin position="695"/>
        <end position="697"/>
    </location>
</feature>
<feature type="strand" evidence="3">
    <location>
        <begin position="703"/>
        <end position="708"/>
    </location>
</feature>
<feature type="strand" evidence="3">
    <location>
        <begin position="711"/>
        <end position="715"/>
    </location>
</feature>
<feature type="strand" evidence="4">
    <location>
        <begin position="717"/>
        <end position="719"/>
    </location>
</feature>
<feature type="strand" evidence="3">
    <location>
        <begin position="721"/>
        <end position="725"/>
    </location>
</feature>
<feature type="strand" evidence="3">
    <location>
        <begin position="729"/>
        <end position="731"/>
    </location>
</feature>
<feature type="strand" evidence="4">
    <location>
        <begin position="737"/>
        <end position="739"/>
    </location>
</feature>
<feature type="strand" evidence="3">
    <location>
        <begin position="755"/>
        <end position="757"/>
    </location>
</feature>
<feature type="strand" evidence="3">
    <location>
        <begin position="770"/>
        <end position="777"/>
    </location>
</feature>
<feature type="strand" evidence="4">
    <location>
        <begin position="781"/>
        <end position="784"/>
    </location>
</feature>
<feature type="helix" evidence="3">
    <location>
        <begin position="785"/>
        <end position="787"/>
    </location>
</feature>
<feature type="strand" evidence="3">
    <location>
        <begin position="788"/>
        <end position="792"/>
    </location>
</feature>
<feature type="helix" evidence="3">
    <location>
        <begin position="794"/>
        <end position="797"/>
    </location>
</feature>
<feature type="turn" evidence="4">
    <location>
        <begin position="798"/>
        <end position="801"/>
    </location>
</feature>
<feature type="strand" evidence="3">
    <location>
        <begin position="803"/>
        <end position="812"/>
    </location>
</feature>
<feature type="helix" evidence="3">
    <location>
        <begin position="832"/>
        <end position="835"/>
    </location>
</feature>
<feature type="strand" evidence="3">
    <location>
        <begin position="842"/>
        <end position="844"/>
    </location>
</feature>
<feature type="strand" evidence="3">
    <location>
        <begin position="855"/>
        <end position="857"/>
    </location>
</feature>
<feature type="strand" evidence="3">
    <location>
        <begin position="859"/>
        <end position="862"/>
    </location>
</feature>
<feature type="helix" evidence="3">
    <location>
        <begin position="871"/>
        <end position="878"/>
    </location>
</feature>
<feature type="strand" evidence="3">
    <location>
        <begin position="886"/>
        <end position="888"/>
    </location>
</feature>
<feature type="strand" evidence="3">
    <location>
        <begin position="899"/>
        <end position="908"/>
    </location>
</feature>
<feature type="helix" evidence="3">
    <location>
        <begin position="909"/>
        <end position="911"/>
    </location>
</feature>
<feature type="strand" evidence="3">
    <location>
        <begin position="920"/>
        <end position="931"/>
    </location>
</feature>
<feature type="strand" evidence="3">
    <location>
        <begin position="938"/>
        <end position="940"/>
    </location>
</feature>
<feature type="strand" evidence="3">
    <location>
        <begin position="942"/>
        <end position="944"/>
    </location>
</feature>
<feature type="strand" evidence="3">
    <location>
        <begin position="948"/>
        <end position="953"/>
    </location>
</feature>
<feature type="helix" evidence="3">
    <location>
        <begin position="955"/>
        <end position="957"/>
    </location>
</feature>
<feature type="strand" evidence="3">
    <location>
        <begin position="968"/>
        <end position="971"/>
    </location>
</feature>
<feature type="helix" evidence="3">
    <location>
        <begin position="975"/>
        <end position="978"/>
    </location>
</feature>
<feature type="helix" evidence="3">
    <location>
        <begin position="983"/>
        <end position="997"/>
    </location>
</feature>
<feature type="strand" evidence="3">
    <location>
        <begin position="1005"/>
        <end position="1007"/>
    </location>
</feature>
<feature type="helix" evidence="3">
    <location>
        <begin position="1011"/>
        <end position="1020"/>
    </location>
</feature>
<feature type="strand" evidence="3">
    <location>
        <begin position="1027"/>
        <end position="1029"/>
    </location>
</feature>
<feature type="turn" evidence="3">
    <location>
        <begin position="1034"/>
        <end position="1036"/>
    </location>
</feature>
<feature type="strand" evidence="3">
    <location>
        <begin position="1044"/>
        <end position="1055"/>
    </location>
</feature>
<feature type="turn" evidence="3">
    <location>
        <begin position="1059"/>
        <end position="1061"/>
    </location>
</feature>
<feature type="strand" evidence="3">
    <location>
        <begin position="1063"/>
        <end position="1067"/>
    </location>
</feature>
<feature type="strand" evidence="3">
    <location>
        <begin position="1072"/>
        <end position="1074"/>
    </location>
</feature>
<feature type="turn" evidence="3">
    <location>
        <begin position="1081"/>
        <end position="1084"/>
    </location>
</feature>
<feature type="strand" evidence="3">
    <location>
        <begin position="1087"/>
        <end position="1089"/>
    </location>
</feature>
<feature type="helix" evidence="3">
    <location>
        <begin position="1091"/>
        <end position="1093"/>
    </location>
</feature>
<feature type="helix" evidence="3">
    <location>
        <begin position="1095"/>
        <end position="1100"/>
    </location>
</feature>
<feature type="helix" evidence="3">
    <location>
        <begin position="1103"/>
        <end position="1111"/>
    </location>
</feature>
<feature type="turn" evidence="3">
    <location>
        <begin position="1112"/>
        <end position="1115"/>
    </location>
</feature>
<feature type="helix" evidence="3">
    <location>
        <begin position="1117"/>
        <end position="1129"/>
    </location>
</feature>
<feature type="helix" evidence="3">
    <location>
        <begin position="1140"/>
        <end position="1151"/>
    </location>
</feature>
<feature type="strand" evidence="3">
    <location>
        <begin position="1154"/>
        <end position="1164"/>
    </location>
</feature>
<organism>
    <name type="scientific">Acetivibrio thermocellus (strain ATCC 27405 / DSM 1237 / JCM 9322 / NBRC 103400 / NCIMB 10682 / NRRL B-4536 / VPI 7372)</name>
    <name type="common">Clostridium thermocellum</name>
    <dbReference type="NCBI Taxonomy" id="203119"/>
    <lineage>
        <taxon>Bacteria</taxon>
        <taxon>Bacillati</taxon>
        <taxon>Bacillota</taxon>
        <taxon>Clostridia</taxon>
        <taxon>Eubacteriales</taxon>
        <taxon>Oscillospiraceae</taxon>
        <taxon>Acetivibrio</taxon>
    </lineage>
</organism>
<sequence length="1250" mass="139956">MVHPVKLGRNVRMSYSKIDEVIDMPNLIEIQKNSYEQFLKEGFKEVFKDVNPITDYTGNLILEFVDYSLDEPPKYSVDECKERDATYAAPLKVKVRLINKETGEVKEQEIFMGDFPLMTETGTFIINGAERVIVSQLVRSPGIYYAMKIDKAGKQLFSNTVIPNRGAWLEYETDSNDVLSVRIDRTRKLPLTVLVRALGYGTDLEITELFGEDERILATIQKDSTKTEEEGLLEIYKRLRPGEPPTVESAKALLHGLFFDPKRYDLAKPGRFKFNKKLSIAARIHGFIAGENIKDPDTGEIIVAEGETISREKAETIQNAGVNTVILRVDGKNVKVIGNDMVDIKRYVDFDPKEIGINEKVKRDVLMEILEEYKGKGDDAIKKALQERIDDLIPKHITKEDIISSISYIIGLSYGIGSTDDIDHLGNRRLRSVGELLQNQFRIGLSRMERVVRERMTIQDLDVVTPQALINIRPVAAAIKEFFGSSQLSQFMDQTNPLAELTHKRRLSALGPGGLSRERAGFEVRDVHHSHYGRMCPIETPEGPNIGLIGSLSTYARVNEYGFIETPYRKVSKEEPGKVTNEIVYLTADEEDEYIIAQANEPLDEEGRFISNKVVCRYKEEFIEVDPSKIDFMDVSPKQIVSVATSMIPFLENDDANRALMGANMQRQAVPLIKTESPIVGTGIEYRAARDSGVVILAKNPGVVEKVTANEIIIRTKDGKRDTYKLLKYMRSNQGTCINQRPIVKKGEEVEAGDVIADGPSTDNGEIALGKNVLVGFMTWEGYNYEDAILISERLVKDDVFTSIHIEEYEAEARDTKLGPEDITREIPNVSEDALKDLNSEGIIRIGAEVRAGDILVGKVTPKGETELTAEERLLRAIFGEKAREVRDTSLRVPHGESGIVVDVKIFTRENGDELAPGVNKLVRVYVAQKRKISVGDKMAGRHGNKGVISRILPVEDMPFLPDGTPLDIVLNPLGVPSRMNIGQVLEVHLGYAAKALGWKVATPVFDGATEEDIVQTLRKAGLAEDGKSILYDGRTGEPFENRVTVGYMYMLKLAHLVDDKIHARSTGPYSLVTQQPLGGKAQFGGQRFGEMEVWALEAYGAAYTLQEILTVKSDDVVGRVKTYEAIVKGENVPEPGIPECFKVLIKELQSLCLDVKVYSEEQEEIAIKESVEDDLEELNVNIEGREDEVNFNEFNDIGEEITDEDLEVEDFDLQDLNDDDINPDDTIDAELDDNLFDDDFDDTFDDDDL</sequence>
<accession>A3DIZ4</accession>
<gene>
    <name evidence="1" type="primary">rpoB</name>
    <name type="ordered locus">Cthe_2724</name>
</gene>
<proteinExistence type="evidence at protein level"/>
<keyword id="KW-0002">3D-structure</keyword>
<keyword id="KW-0240">DNA-directed RNA polymerase</keyword>
<keyword id="KW-0548">Nucleotidyltransferase</keyword>
<keyword id="KW-1185">Reference proteome</keyword>
<keyword id="KW-0804">Transcription</keyword>
<keyword id="KW-0808">Transferase</keyword>
<comment type="function">
    <text evidence="1">DNA-dependent RNA polymerase catalyzes the transcription of DNA into RNA using the four ribonucleoside triphosphates as substrates.</text>
</comment>
<comment type="catalytic activity">
    <reaction evidence="1">
        <text>RNA(n) + a ribonucleoside 5'-triphosphate = RNA(n+1) + diphosphate</text>
        <dbReference type="Rhea" id="RHEA:21248"/>
        <dbReference type="Rhea" id="RHEA-COMP:14527"/>
        <dbReference type="Rhea" id="RHEA-COMP:17342"/>
        <dbReference type="ChEBI" id="CHEBI:33019"/>
        <dbReference type="ChEBI" id="CHEBI:61557"/>
        <dbReference type="ChEBI" id="CHEBI:140395"/>
        <dbReference type="EC" id="2.7.7.6"/>
    </reaction>
</comment>
<comment type="subunit">
    <text evidence="1">The RNAP catalytic core consists of 2 alpha, 1 beta, 1 beta' and 1 omega subunit. When a sigma factor is associated with the core the holoenzyme is formed, which can initiate transcription.</text>
</comment>
<comment type="similarity">
    <text evidence="1">Belongs to the RNA polymerase beta chain family.</text>
</comment>